<name>PROBT_OLEEU</name>
<accession>A4GE47</accession>
<feature type="initiator methionine" description="Removed" evidence="1">
    <location>
        <position position="1"/>
    </location>
</feature>
<feature type="chain" id="PRO_0000425037" description="Profilin-2">
    <location>
        <begin position="2"/>
        <end position="134"/>
    </location>
</feature>
<feature type="short sequence motif" description="Involved in PIP2 interaction">
    <location>
        <begin position="84"/>
        <end position="100"/>
    </location>
</feature>
<feature type="modified residue" description="Phosphothreonine" evidence="1">
    <location>
        <position position="114"/>
    </location>
</feature>
<feature type="disulfide bond" evidence="3">
    <location>
        <begin position="13"/>
        <end position="118"/>
    </location>
</feature>
<organism>
    <name type="scientific">Olea europaea</name>
    <name type="common">Common olive</name>
    <dbReference type="NCBI Taxonomy" id="4146"/>
    <lineage>
        <taxon>Eukaryota</taxon>
        <taxon>Viridiplantae</taxon>
        <taxon>Streptophyta</taxon>
        <taxon>Embryophyta</taxon>
        <taxon>Tracheophyta</taxon>
        <taxon>Spermatophyta</taxon>
        <taxon>Magnoliopsida</taxon>
        <taxon>eudicotyledons</taxon>
        <taxon>Gunneridae</taxon>
        <taxon>Pentapetalae</taxon>
        <taxon>asterids</taxon>
        <taxon>lamiids</taxon>
        <taxon>Lamiales</taxon>
        <taxon>Oleaceae</taxon>
        <taxon>Oleeae</taxon>
        <taxon>Olea</taxon>
    </lineage>
</organism>
<sequence length="134" mass="14358">MSWQTYVDDHLMCDIEGHEGHRLTAAAIVGHDGSVWAQSATFPQFKPEEMNGIMTDFNEPGHLAPTGLHLGGTKYMVIQGEAGAVIRGKKGSGGITIKKTGQALVFGIYEEPVTPGQCNMVVEGLGDYLLEQGL</sequence>
<comment type="function">
    <text evidence="1">Binds to actin and affects the structure of the cytoskeleton. At high concentrations, profilin prevents the polymerization of actin, whereas it enhances it at low concentrations (By similarity).</text>
</comment>
<comment type="subunit">
    <text evidence="1">Occurs in many kinds of cells as a complex with monomeric actin in a 1:1 ratio.</text>
</comment>
<comment type="subcellular location">
    <subcellularLocation>
        <location evidence="1">Cytoplasm</location>
        <location evidence="1">Cytoskeleton</location>
    </subcellularLocation>
</comment>
<comment type="PTM">
    <text evidence="1">Phosphorylated by MAP kinases.</text>
</comment>
<comment type="polymorphism">
    <text>Several isoforms of the allergen exist due to polymorphism.</text>
</comment>
<comment type="allergen">
    <text>Causes an allergic reaction in human.</text>
</comment>
<comment type="miscellaneous">
    <text evidence="3">The variability of the residues taking part of IgE-binding epitopes might be responsible of the difference in cross-reactivity among olive pollen cultivars, and between distantly related pollen species, leading to a variable range of allergy reactions among atopic patients.</text>
</comment>
<comment type="similarity">
    <text evidence="2">Belongs to the profilin family.</text>
</comment>
<keyword id="KW-0009">Actin-binding</keyword>
<keyword id="KW-0020">Allergen</keyword>
<keyword id="KW-0963">Cytoplasm</keyword>
<keyword id="KW-0206">Cytoskeleton</keyword>
<keyword id="KW-1015">Disulfide bond</keyword>
<keyword id="KW-0597">Phosphoprotein</keyword>
<evidence type="ECO:0000250" key="1"/>
<evidence type="ECO:0000305" key="2"/>
<evidence type="ECO:0000305" key="3">
    <source>
    </source>
</evidence>
<protein>
    <recommendedName>
        <fullName>Profilin-2</fullName>
    </recommendedName>
    <alternativeName>
        <fullName>Pollen allergen Ole e 2</fullName>
    </alternativeName>
    <allergenName>Ole e 2</allergenName>
</protein>
<proteinExistence type="evidence at protein level"/>
<reference key="1">
    <citation type="journal article" date="2012" name="PLoS ONE">
        <title>Characterization of profilin polymorphism in pollen with a focus on multifunctionality.</title>
        <authorList>
            <person name="Jimenez-Lopez J.C."/>
            <person name="Morales S."/>
            <person name="Castro A.J."/>
            <person name="Volkmann D."/>
            <person name="Rodriguez-Garcia M.I."/>
            <person name="Alche Jde D."/>
        </authorList>
    </citation>
    <scope>NUCLEOTIDE SEQUENCE [MRNA]</scope>
    <scope>POLYMORPHISM</scope>
    <source>
        <strain>cv. Lechin de Granada</strain>
        <tissue>Pollen</tissue>
    </source>
</reference>
<reference key="2">
    <citation type="journal article" date="2013" name="PLoS ONE">
        <title>Analysis of the effects of polymorphism on pollen profilin structural functionality and the generation of conformational, T- and B-cell epitopes.</title>
        <authorList>
            <person name="Jimenez-Lopez J.C."/>
            <person name="Rodriguez-Garcia M.I."/>
            <person name="Alche J.D."/>
        </authorList>
    </citation>
    <scope>3D-STRUCTURE MODELING</scope>
    <scope>DISULFIDE BOND</scope>
</reference>
<dbReference type="EMBL" id="DQ317572">
    <property type="protein sequence ID" value="ABC47415.1"/>
    <property type="molecule type" value="mRNA"/>
</dbReference>
<dbReference type="SMR" id="A4GE47"/>
<dbReference type="Allergome" id="490">
    <property type="allergen name" value="Ole e 2"/>
</dbReference>
<dbReference type="GO" id="GO:0005938">
    <property type="term" value="C:cell cortex"/>
    <property type="evidence" value="ECO:0007669"/>
    <property type="project" value="TreeGrafter"/>
</dbReference>
<dbReference type="GO" id="GO:0005856">
    <property type="term" value="C:cytoskeleton"/>
    <property type="evidence" value="ECO:0007669"/>
    <property type="project" value="UniProtKB-SubCell"/>
</dbReference>
<dbReference type="GO" id="GO:0003785">
    <property type="term" value="F:actin monomer binding"/>
    <property type="evidence" value="ECO:0007669"/>
    <property type="project" value="TreeGrafter"/>
</dbReference>
<dbReference type="CDD" id="cd00148">
    <property type="entry name" value="PROF"/>
    <property type="match status" value="1"/>
</dbReference>
<dbReference type="FunFam" id="3.30.450.30:FF:000001">
    <property type="entry name" value="Profilin"/>
    <property type="match status" value="1"/>
</dbReference>
<dbReference type="Gene3D" id="3.30.450.30">
    <property type="entry name" value="Dynein light chain 2a, cytoplasmic"/>
    <property type="match status" value="1"/>
</dbReference>
<dbReference type="InterPro" id="IPR048278">
    <property type="entry name" value="PFN"/>
</dbReference>
<dbReference type="InterPro" id="IPR005455">
    <property type="entry name" value="PFN_euk"/>
</dbReference>
<dbReference type="InterPro" id="IPR036140">
    <property type="entry name" value="PFN_sf"/>
</dbReference>
<dbReference type="InterPro" id="IPR027310">
    <property type="entry name" value="Profilin_CS"/>
</dbReference>
<dbReference type="PANTHER" id="PTHR11604">
    <property type="entry name" value="PROFILIN"/>
    <property type="match status" value="1"/>
</dbReference>
<dbReference type="PANTHER" id="PTHR11604:SF25">
    <property type="entry name" value="PROFILIN-5"/>
    <property type="match status" value="1"/>
</dbReference>
<dbReference type="Pfam" id="PF00235">
    <property type="entry name" value="Profilin"/>
    <property type="match status" value="1"/>
</dbReference>
<dbReference type="PRINTS" id="PR00392">
    <property type="entry name" value="PROFILIN"/>
</dbReference>
<dbReference type="PRINTS" id="PR01640">
    <property type="entry name" value="PROFILINPLNT"/>
</dbReference>
<dbReference type="SMART" id="SM00392">
    <property type="entry name" value="PROF"/>
    <property type="match status" value="1"/>
</dbReference>
<dbReference type="SUPFAM" id="SSF55770">
    <property type="entry name" value="Profilin (actin-binding protein)"/>
    <property type="match status" value="1"/>
</dbReference>
<dbReference type="PROSITE" id="PS00414">
    <property type="entry name" value="PROFILIN"/>
    <property type="match status" value="1"/>
</dbReference>